<evidence type="ECO:0000255" key="1">
    <source>
        <dbReference type="PROSITE-ProRule" id="PRU00520"/>
    </source>
</evidence>
<evidence type="ECO:0000305" key="2"/>
<dbReference type="EC" id="3.6.1.7"/>
<dbReference type="EMBL" id="CP000152">
    <property type="protein sequence ID" value="ABB10227.1"/>
    <property type="status" value="ALT_INIT"/>
    <property type="molecule type" value="Genomic_DNA"/>
</dbReference>
<dbReference type="RefSeq" id="WP_041493146.1">
    <property type="nucleotide sequence ID" value="NC_007511.1"/>
</dbReference>
<dbReference type="SMR" id="Q39BD4"/>
<dbReference type="GeneID" id="45096498"/>
<dbReference type="KEGG" id="bur:Bcep18194_B0110"/>
<dbReference type="PATRIC" id="fig|482957.22.peg.3675"/>
<dbReference type="HOGENOM" id="CLU_141932_1_2_4"/>
<dbReference type="Proteomes" id="UP000002705">
    <property type="component" value="Chromosome 2"/>
</dbReference>
<dbReference type="GO" id="GO:0003998">
    <property type="term" value="F:acylphosphatase activity"/>
    <property type="evidence" value="ECO:0007669"/>
    <property type="project" value="UniProtKB-EC"/>
</dbReference>
<dbReference type="Gene3D" id="3.30.70.100">
    <property type="match status" value="1"/>
</dbReference>
<dbReference type="InterPro" id="IPR020456">
    <property type="entry name" value="Acylphosphatase"/>
</dbReference>
<dbReference type="InterPro" id="IPR001792">
    <property type="entry name" value="Acylphosphatase-like_dom"/>
</dbReference>
<dbReference type="InterPro" id="IPR036046">
    <property type="entry name" value="Acylphosphatase-like_dom_sf"/>
</dbReference>
<dbReference type="InterPro" id="IPR017968">
    <property type="entry name" value="Acylphosphatase_CS"/>
</dbReference>
<dbReference type="NCBIfam" id="NF010998">
    <property type="entry name" value="PRK14424.1"/>
    <property type="match status" value="1"/>
</dbReference>
<dbReference type="PANTHER" id="PTHR47268">
    <property type="entry name" value="ACYLPHOSPHATASE"/>
    <property type="match status" value="1"/>
</dbReference>
<dbReference type="PANTHER" id="PTHR47268:SF4">
    <property type="entry name" value="ACYLPHOSPHATASE"/>
    <property type="match status" value="1"/>
</dbReference>
<dbReference type="Pfam" id="PF00708">
    <property type="entry name" value="Acylphosphatase"/>
    <property type="match status" value="1"/>
</dbReference>
<dbReference type="PRINTS" id="PR00112">
    <property type="entry name" value="ACYLPHPHTASE"/>
</dbReference>
<dbReference type="SUPFAM" id="SSF54975">
    <property type="entry name" value="Acylphosphatase/BLUF domain-like"/>
    <property type="match status" value="1"/>
</dbReference>
<dbReference type="PROSITE" id="PS00150">
    <property type="entry name" value="ACYLPHOSPHATASE_1"/>
    <property type="match status" value="1"/>
</dbReference>
<dbReference type="PROSITE" id="PS00151">
    <property type="entry name" value="ACYLPHOSPHATASE_2"/>
    <property type="match status" value="1"/>
</dbReference>
<dbReference type="PROSITE" id="PS51160">
    <property type="entry name" value="ACYLPHOSPHATASE_3"/>
    <property type="match status" value="1"/>
</dbReference>
<keyword id="KW-0378">Hydrolase</keyword>
<comment type="catalytic activity">
    <reaction>
        <text>an acyl phosphate + H2O = a carboxylate + phosphate + H(+)</text>
        <dbReference type="Rhea" id="RHEA:14965"/>
        <dbReference type="ChEBI" id="CHEBI:15377"/>
        <dbReference type="ChEBI" id="CHEBI:15378"/>
        <dbReference type="ChEBI" id="CHEBI:29067"/>
        <dbReference type="ChEBI" id="CHEBI:43474"/>
        <dbReference type="ChEBI" id="CHEBI:59918"/>
        <dbReference type="EC" id="3.6.1.7"/>
    </reaction>
</comment>
<comment type="similarity">
    <text evidence="2">Belongs to the acylphosphatase family.</text>
</comment>
<comment type="sequence caution" evidence="2">
    <conflict type="erroneous initiation">
        <sequence resource="EMBL-CDS" id="ABB10227"/>
    </conflict>
</comment>
<name>ACYP_BURL3</name>
<reference key="1">
    <citation type="submission" date="2005-10" db="EMBL/GenBank/DDBJ databases">
        <title>Complete sequence of chromosome 2 of Burkholderia sp. 383.</title>
        <authorList>
            <consortium name="US DOE Joint Genome Institute"/>
            <person name="Copeland A."/>
            <person name="Lucas S."/>
            <person name="Lapidus A."/>
            <person name="Barry K."/>
            <person name="Detter J.C."/>
            <person name="Glavina T."/>
            <person name="Hammon N."/>
            <person name="Israni S."/>
            <person name="Pitluck S."/>
            <person name="Chain P."/>
            <person name="Malfatti S."/>
            <person name="Shin M."/>
            <person name="Vergez L."/>
            <person name="Schmutz J."/>
            <person name="Larimer F."/>
            <person name="Land M."/>
            <person name="Kyrpides N."/>
            <person name="Lykidis A."/>
            <person name="Richardson P."/>
        </authorList>
    </citation>
    <scope>NUCLEOTIDE SEQUENCE [LARGE SCALE GENOMIC DNA]</scope>
    <source>
        <strain>ATCC 17760 / DSM 23089 / LMG 22485 / NCIMB 9086 / R18194 / 383</strain>
    </source>
</reference>
<organism>
    <name type="scientific">Burkholderia lata (strain ATCC 17760 / DSM 23089 / LMG 22485 / NCIMB 9086 / R18194 / 383)</name>
    <dbReference type="NCBI Taxonomy" id="482957"/>
    <lineage>
        <taxon>Bacteria</taxon>
        <taxon>Pseudomonadati</taxon>
        <taxon>Pseudomonadota</taxon>
        <taxon>Betaproteobacteria</taxon>
        <taxon>Burkholderiales</taxon>
        <taxon>Burkholderiaceae</taxon>
        <taxon>Burkholderia</taxon>
        <taxon>Burkholderia cepacia complex</taxon>
    </lineage>
</organism>
<feature type="chain" id="PRO_0000326675" description="Acylphosphatase">
    <location>
        <begin position="1"/>
        <end position="98"/>
    </location>
</feature>
<feature type="domain" description="Acylphosphatase-like" evidence="1">
    <location>
        <begin position="12"/>
        <end position="98"/>
    </location>
</feature>
<feature type="active site" evidence="1">
    <location>
        <position position="27"/>
    </location>
</feature>
<feature type="active site" evidence="1">
    <location>
        <position position="45"/>
    </location>
</feature>
<gene>
    <name type="primary">acyP</name>
    <name type="ordered locus">Bcep18194_B0110</name>
</gene>
<accession>Q39BD4</accession>
<sequence length="98" mass="11397">MSRNELDERIETYYVRVRGVVQGVGFRHATVREAHALKLRGWVANLEDGTVEAMIQGSGAQIDRMLAWLRHGPPAARVTEVTFEERQTERRFERFQQQ</sequence>
<protein>
    <recommendedName>
        <fullName>Acylphosphatase</fullName>
        <ecNumber>3.6.1.7</ecNumber>
    </recommendedName>
    <alternativeName>
        <fullName>Acylphosphate phosphohydrolase</fullName>
    </alternativeName>
</protein>
<proteinExistence type="inferred from homology"/>